<evidence type="ECO:0000255" key="1">
    <source>
        <dbReference type="HAMAP-Rule" id="MF_01695"/>
    </source>
</evidence>
<reference key="1">
    <citation type="journal article" date="2009" name="Stand. Genomic Sci.">
        <title>Complete genome sequence of Actinosynnema mirum type strain (101).</title>
        <authorList>
            <person name="Land M."/>
            <person name="Lapidus A."/>
            <person name="Mayilraj S."/>
            <person name="Chen F."/>
            <person name="Copeland A."/>
            <person name="Del Rio T.G."/>
            <person name="Nolan M."/>
            <person name="Lucas S."/>
            <person name="Tice H."/>
            <person name="Cheng J.F."/>
            <person name="Chertkov O."/>
            <person name="Bruce D."/>
            <person name="Goodwin L."/>
            <person name="Pitluck S."/>
            <person name="Rohde M."/>
            <person name="Goker M."/>
            <person name="Pati A."/>
            <person name="Ivanova N."/>
            <person name="Mavromatis K."/>
            <person name="Chen A."/>
            <person name="Palaniappan K."/>
            <person name="Hauser L."/>
            <person name="Chang Y.J."/>
            <person name="Jeffries C.C."/>
            <person name="Brettin T."/>
            <person name="Detter J.C."/>
            <person name="Han C."/>
            <person name="Chain P."/>
            <person name="Tindall B.J."/>
            <person name="Bristow J."/>
            <person name="Eisen J.A."/>
            <person name="Markowitz V."/>
            <person name="Hugenholtz P."/>
            <person name="Kyrpides N.C."/>
            <person name="Klenk H.P."/>
        </authorList>
    </citation>
    <scope>NUCLEOTIDE SEQUENCE [LARGE SCALE GENOMIC DNA]</scope>
    <source>
        <strain>ATCC 29888 / DSM 43827 / JCM 3225 / NBRC 14064 / NCIMB 13271 / NRRL B-12336 / IMRU 3971 / 101</strain>
    </source>
</reference>
<dbReference type="EC" id="2.4.1.250" evidence="1"/>
<dbReference type="EMBL" id="CP001630">
    <property type="protein sequence ID" value="ACU40554.1"/>
    <property type="molecule type" value="Genomic_DNA"/>
</dbReference>
<dbReference type="RefSeq" id="WP_015805431.1">
    <property type="nucleotide sequence ID" value="NC_013093.1"/>
</dbReference>
<dbReference type="SMR" id="C6WPK3"/>
<dbReference type="STRING" id="446462.Amir_6757"/>
<dbReference type="CAZy" id="GT4">
    <property type="family name" value="Glycosyltransferase Family 4"/>
</dbReference>
<dbReference type="KEGG" id="ami:Amir_6757"/>
<dbReference type="eggNOG" id="COG0438">
    <property type="taxonomic scope" value="Bacteria"/>
</dbReference>
<dbReference type="HOGENOM" id="CLU_009583_2_3_11"/>
<dbReference type="OrthoDB" id="9810929at2"/>
<dbReference type="Proteomes" id="UP000002213">
    <property type="component" value="Chromosome"/>
</dbReference>
<dbReference type="GO" id="GO:0008375">
    <property type="term" value="F:acetylglucosaminyltransferase activity"/>
    <property type="evidence" value="ECO:0007669"/>
    <property type="project" value="UniProtKB-UniRule"/>
</dbReference>
<dbReference type="GO" id="GO:0102710">
    <property type="term" value="F:D-inositol-3-phosphate glycosyltransferase activity"/>
    <property type="evidence" value="ECO:0007669"/>
    <property type="project" value="UniProtKB-EC"/>
</dbReference>
<dbReference type="GO" id="GO:0000287">
    <property type="term" value="F:magnesium ion binding"/>
    <property type="evidence" value="ECO:0007669"/>
    <property type="project" value="UniProtKB-UniRule"/>
</dbReference>
<dbReference type="GO" id="GO:0010125">
    <property type="term" value="P:mycothiol biosynthetic process"/>
    <property type="evidence" value="ECO:0007669"/>
    <property type="project" value="UniProtKB-UniRule"/>
</dbReference>
<dbReference type="CDD" id="cd03800">
    <property type="entry name" value="GT4_sucrose_synthase"/>
    <property type="match status" value="1"/>
</dbReference>
<dbReference type="Gene3D" id="3.40.50.2000">
    <property type="entry name" value="Glycogen Phosphorylase B"/>
    <property type="match status" value="2"/>
</dbReference>
<dbReference type="HAMAP" id="MF_01695">
    <property type="entry name" value="MshA"/>
    <property type="match status" value="1"/>
</dbReference>
<dbReference type="InterPro" id="IPR001296">
    <property type="entry name" value="Glyco_trans_1"/>
</dbReference>
<dbReference type="InterPro" id="IPR028098">
    <property type="entry name" value="Glyco_trans_4-like_N"/>
</dbReference>
<dbReference type="InterPro" id="IPR017814">
    <property type="entry name" value="Mycothiol_biosynthesis_MshA"/>
</dbReference>
<dbReference type="NCBIfam" id="TIGR03449">
    <property type="entry name" value="mycothiol_MshA"/>
    <property type="match status" value="1"/>
</dbReference>
<dbReference type="PANTHER" id="PTHR12526:SF510">
    <property type="entry name" value="D-INOSITOL 3-PHOSPHATE GLYCOSYLTRANSFERASE"/>
    <property type="match status" value="1"/>
</dbReference>
<dbReference type="PANTHER" id="PTHR12526">
    <property type="entry name" value="GLYCOSYLTRANSFERASE"/>
    <property type="match status" value="1"/>
</dbReference>
<dbReference type="Pfam" id="PF13579">
    <property type="entry name" value="Glyco_trans_4_4"/>
    <property type="match status" value="1"/>
</dbReference>
<dbReference type="Pfam" id="PF00534">
    <property type="entry name" value="Glycos_transf_1"/>
    <property type="match status" value="1"/>
</dbReference>
<dbReference type="SUPFAM" id="SSF53756">
    <property type="entry name" value="UDP-Glycosyltransferase/glycogen phosphorylase"/>
    <property type="match status" value="1"/>
</dbReference>
<organism>
    <name type="scientific">Actinosynnema mirum (strain ATCC 29888 / DSM 43827 / JCM 3225 / NBRC 14064 / NCIMB 13271 / NRRL B-12336 / IMRU 3971 / 101)</name>
    <dbReference type="NCBI Taxonomy" id="446462"/>
    <lineage>
        <taxon>Bacteria</taxon>
        <taxon>Bacillati</taxon>
        <taxon>Actinomycetota</taxon>
        <taxon>Actinomycetes</taxon>
        <taxon>Pseudonocardiales</taxon>
        <taxon>Pseudonocardiaceae</taxon>
        <taxon>Actinosynnema</taxon>
    </lineage>
</organism>
<name>MSHA_ACTMD</name>
<proteinExistence type="inferred from homology"/>
<sequence length="417" mass="43718">MKRVAVLSVHTSPLEQPGTGDAGGMNVYVVQTATAMARRGVEVEIFTRATSSELPPVAELAPGVKVRHVVAGPFSGLEKEELPGQLCAFTAGVLRAEARHEPGHYDVVHSHYWLSGQVGWLARERWGVPLVHTAHTLAKVKNLALADSDAPEPRMRVIGEEQVVAEADRLIANTDVEADQLTGLYAADPAKVLVVPPGVDLGRFTPGDRGEARRSLGLAPDALVLAFVGRIQPLKAPDVLVRATAALLERDPGLRSRLVVLVVGGPSGSGMRTPDELVGLARSLGVADVVRFLPPQGGGSLAQVYRAADAVAVPSHNESFGLVALEAQACGTPVVAAAVGGLPVAVRDGVTGLLVAGHRTSDWADALSRIALAPGLREALAGNAVGHARGFSWDRTTESLLAAYGQARDVFREEVYA</sequence>
<comment type="function">
    <text evidence="1">Catalyzes the transfer of a N-acetyl-glucosamine moiety to 1D-myo-inositol 3-phosphate to produce 1D-myo-inositol 2-acetamido-2-deoxy-glucopyranoside 3-phosphate in the mycothiol biosynthesis pathway.</text>
</comment>
<comment type="catalytic activity">
    <reaction evidence="1">
        <text>1D-myo-inositol 3-phosphate + UDP-N-acetyl-alpha-D-glucosamine = 1D-myo-inositol 2-acetamido-2-deoxy-alpha-D-glucopyranoside 3-phosphate + UDP + H(+)</text>
        <dbReference type="Rhea" id="RHEA:26188"/>
        <dbReference type="ChEBI" id="CHEBI:15378"/>
        <dbReference type="ChEBI" id="CHEBI:57705"/>
        <dbReference type="ChEBI" id="CHEBI:58223"/>
        <dbReference type="ChEBI" id="CHEBI:58401"/>
        <dbReference type="ChEBI" id="CHEBI:58892"/>
        <dbReference type="EC" id="2.4.1.250"/>
    </reaction>
</comment>
<comment type="subunit">
    <text evidence="1">Homodimer.</text>
</comment>
<comment type="similarity">
    <text evidence="1">Belongs to the glycosyltransferase group 1 family. MshA subfamily.</text>
</comment>
<accession>C6WPK3</accession>
<protein>
    <recommendedName>
        <fullName>D-inositol 3-phosphate glycosyltransferase</fullName>
        <ecNumber evidence="1">2.4.1.250</ecNumber>
    </recommendedName>
    <alternativeName>
        <fullName evidence="1">N-acetylglucosamine-inositol-phosphate N-acetylglucosaminyltransferase</fullName>
        <shortName evidence="1">GlcNAc-Ins-P N-acetylglucosaminyltransferase</shortName>
    </alternativeName>
</protein>
<feature type="chain" id="PRO_0000400108" description="D-inositol 3-phosphate glycosyltransferase">
    <location>
        <begin position="1"/>
        <end position="417"/>
    </location>
</feature>
<feature type="binding site" evidence="1">
    <location>
        <position position="10"/>
    </location>
    <ligand>
        <name>1D-myo-inositol 3-phosphate</name>
        <dbReference type="ChEBI" id="CHEBI:58401"/>
    </ligand>
</feature>
<feature type="binding site" evidence="1">
    <location>
        <begin position="16"/>
        <end position="17"/>
    </location>
    <ligand>
        <name>UDP-N-acetyl-alpha-D-glucosamine</name>
        <dbReference type="ChEBI" id="CHEBI:57705"/>
    </ligand>
</feature>
<feature type="binding site" evidence="1">
    <location>
        <begin position="21"/>
        <end position="26"/>
    </location>
    <ligand>
        <name>1D-myo-inositol 3-phosphate</name>
        <dbReference type="ChEBI" id="CHEBI:58401"/>
    </ligand>
</feature>
<feature type="binding site" evidence="1">
    <location>
        <position position="24"/>
    </location>
    <ligand>
        <name>UDP-N-acetyl-alpha-D-glucosamine</name>
        <dbReference type="ChEBI" id="CHEBI:57705"/>
    </ligand>
</feature>
<feature type="binding site" evidence="1">
    <location>
        <position position="79"/>
    </location>
    <ligand>
        <name>1D-myo-inositol 3-phosphate</name>
        <dbReference type="ChEBI" id="CHEBI:58401"/>
    </ligand>
</feature>
<feature type="binding site" evidence="1">
    <location>
        <position position="112"/>
    </location>
    <ligand>
        <name>1D-myo-inositol 3-phosphate</name>
        <dbReference type="ChEBI" id="CHEBI:58401"/>
    </ligand>
</feature>
<feature type="binding site" evidence="1">
    <location>
        <position position="136"/>
    </location>
    <ligand>
        <name>1D-myo-inositol 3-phosphate</name>
        <dbReference type="ChEBI" id="CHEBI:58401"/>
    </ligand>
</feature>
<feature type="binding site" evidence="1">
    <location>
        <position position="156"/>
    </location>
    <ligand>
        <name>1D-myo-inositol 3-phosphate</name>
        <dbReference type="ChEBI" id="CHEBI:58401"/>
    </ligand>
</feature>
<feature type="binding site" evidence="1">
    <location>
        <position position="230"/>
    </location>
    <ligand>
        <name>UDP-N-acetyl-alpha-D-glucosamine</name>
        <dbReference type="ChEBI" id="CHEBI:57705"/>
    </ligand>
</feature>
<feature type="binding site" evidence="1">
    <location>
        <position position="235"/>
    </location>
    <ligand>
        <name>UDP-N-acetyl-alpha-D-glucosamine</name>
        <dbReference type="ChEBI" id="CHEBI:57705"/>
    </ligand>
</feature>
<feature type="binding site" evidence="1">
    <location>
        <position position="296"/>
    </location>
    <ligand>
        <name>UDP-N-acetyl-alpha-D-glucosamine</name>
        <dbReference type="ChEBI" id="CHEBI:57705"/>
    </ligand>
</feature>
<feature type="binding site" evidence="1">
    <location>
        <position position="305"/>
    </location>
    <ligand>
        <name>Mg(2+)</name>
        <dbReference type="ChEBI" id="CHEBI:18420"/>
    </ligand>
</feature>
<feature type="binding site" evidence="1">
    <location>
        <position position="306"/>
    </location>
    <ligand>
        <name>Mg(2+)</name>
        <dbReference type="ChEBI" id="CHEBI:18420"/>
    </ligand>
</feature>
<feature type="binding site" evidence="1">
    <location>
        <position position="308"/>
    </location>
    <ligand>
        <name>Mg(2+)</name>
        <dbReference type="ChEBI" id="CHEBI:18420"/>
    </ligand>
</feature>
<feature type="binding site" evidence="1">
    <location>
        <position position="318"/>
    </location>
    <ligand>
        <name>UDP-N-acetyl-alpha-D-glucosamine</name>
        <dbReference type="ChEBI" id="CHEBI:57705"/>
    </ligand>
</feature>
<feature type="binding site" evidence="1">
    <location>
        <position position="326"/>
    </location>
    <ligand>
        <name>UDP-N-acetyl-alpha-D-glucosamine</name>
        <dbReference type="ChEBI" id="CHEBI:57705"/>
    </ligand>
</feature>
<feature type="binding site" evidence="1">
    <location>
        <position position="332"/>
    </location>
    <ligand>
        <name>Mg(2+)</name>
        <dbReference type="ChEBI" id="CHEBI:18420"/>
    </ligand>
</feature>
<gene>
    <name evidence="1" type="primary">mshA</name>
    <name type="ordered locus">Amir_6757</name>
</gene>
<keyword id="KW-0328">Glycosyltransferase</keyword>
<keyword id="KW-0460">Magnesium</keyword>
<keyword id="KW-0479">Metal-binding</keyword>
<keyword id="KW-1185">Reference proteome</keyword>
<keyword id="KW-0808">Transferase</keyword>